<keyword id="KW-0028">Amino-acid biosynthesis</keyword>
<keyword id="KW-0057">Aromatic amino acid biosynthesis</keyword>
<keyword id="KW-0067">ATP-binding</keyword>
<keyword id="KW-0963">Cytoplasm</keyword>
<keyword id="KW-0418">Kinase</keyword>
<keyword id="KW-0547">Nucleotide-binding</keyword>
<keyword id="KW-1185">Reference proteome</keyword>
<keyword id="KW-0808">Transferase</keyword>
<feature type="chain" id="PRO_1000059940" description="Shikimate kinase">
    <location>
        <begin position="1"/>
        <end position="290"/>
    </location>
</feature>
<feature type="binding site" evidence="1">
    <location>
        <begin position="81"/>
        <end position="91"/>
    </location>
    <ligand>
        <name>ATP</name>
        <dbReference type="ChEBI" id="CHEBI:30616"/>
    </ligand>
</feature>
<gene>
    <name evidence="1" type="primary">aroK</name>
    <name type="ordered locus">UNCMA_16180</name>
    <name type="ORF">RCIX1316</name>
</gene>
<reference key="1">
    <citation type="journal article" date="2006" name="Science">
        <title>Genome of rice cluster I archaea -- the key methane producers in the rice rhizosphere.</title>
        <authorList>
            <person name="Erkel C."/>
            <person name="Kube M."/>
            <person name="Reinhardt R."/>
            <person name="Liesack W."/>
        </authorList>
    </citation>
    <scope>NUCLEOTIDE SEQUENCE [LARGE SCALE GENOMIC DNA]</scope>
    <source>
        <strain>DSM 22066 / NBRC 105507 / MRE50</strain>
    </source>
</reference>
<protein>
    <recommendedName>
        <fullName evidence="1">Shikimate kinase</fullName>
        <shortName evidence="1">SK</shortName>
        <ecNumber evidence="1">2.7.1.71</ecNumber>
    </recommendedName>
</protein>
<evidence type="ECO:0000255" key="1">
    <source>
        <dbReference type="HAMAP-Rule" id="MF_00370"/>
    </source>
</evidence>
<sequence length="290" mass="30637">MKSHGTAYGAGTIINAIAVWKGSAFAIDLKTHATVELRGDLIEGEIEGGGDSRLIERACELTLDKLGVDSGAKIRTTSEIPIASGLKSSSAAANATIIATCRAARQSVDPLEMVRIGVQAALDVGVSVTGAFDDACASMLGGVVLTDNREKALLKREVLESKVVVYAPDKKAFSAQTDVKKSRLIAPWVETAFDIAMRGDYRKAMALNGFLYCSALGFSAEPILAALELGVTGVSLSGTGPSYVALVSEEGEEADRLKKAWSAYPGRVFVTEVINEGAFLLEGEECRWNT</sequence>
<name>AROK_METAR</name>
<comment type="catalytic activity">
    <reaction evidence="1">
        <text>shikimate + ATP = 3-phosphoshikimate + ADP + H(+)</text>
        <dbReference type="Rhea" id="RHEA:13121"/>
        <dbReference type="ChEBI" id="CHEBI:15378"/>
        <dbReference type="ChEBI" id="CHEBI:30616"/>
        <dbReference type="ChEBI" id="CHEBI:36208"/>
        <dbReference type="ChEBI" id="CHEBI:145989"/>
        <dbReference type="ChEBI" id="CHEBI:456216"/>
        <dbReference type="EC" id="2.7.1.71"/>
    </reaction>
</comment>
<comment type="pathway">
    <text evidence="1">Metabolic intermediate biosynthesis; chorismate biosynthesis; chorismate from D-erythrose 4-phosphate and phosphoenolpyruvate: step 5/7.</text>
</comment>
<comment type="subcellular location">
    <subcellularLocation>
        <location evidence="1">Cytoplasm</location>
    </subcellularLocation>
</comment>
<comment type="similarity">
    <text evidence="1">Belongs to the GHMP kinase family. Archaeal shikimate kinase subfamily.</text>
</comment>
<accession>Q0W4U0</accession>
<proteinExistence type="inferred from homology"/>
<organism>
    <name type="scientific">Methanocella arvoryzae (strain DSM 22066 / NBRC 105507 / MRE50)</name>
    <dbReference type="NCBI Taxonomy" id="351160"/>
    <lineage>
        <taxon>Archaea</taxon>
        <taxon>Methanobacteriati</taxon>
        <taxon>Methanobacteriota</taxon>
        <taxon>Stenosarchaea group</taxon>
        <taxon>Methanomicrobia</taxon>
        <taxon>Methanocellales</taxon>
        <taxon>Methanocellaceae</taxon>
        <taxon>Methanocella</taxon>
    </lineage>
</organism>
<dbReference type="EC" id="2.7.1.71" evidence="1"/>
<dbReference type="EMBL" id="AM114193">
    <property type="protein sequence ID" value="CAJ36603.1"/>
    <property type="molecule type" value="Genomic_DNA"/>
</dbReference>
<dbReference type="RefSeq" id="WP_012035944.1">
    <property type="nucleotide sequence ID" value="NC_009464.1"/>
</dbReference>
<dbReference type="SMR" id="Q0W4U0"/>
<dbReference type="STRING" id="351160.RCIX1316"/>
<dbReference type="GeneID" id="5145349"/>
<dbReference type="KEGG" id="rci:RCIX1316"/>
<dbReference type="PATRIC" id="fig|351160.9.peg.1655"/>
<dbReference type="eggNOG" id="arCOG01025">
    <property type="taxonomic scope" value="Archaea"/>
</dbReference>
<dbReference type="OrthoDB" id="9602at2157"/>
<dbReference type="UniPathway" id="UPA00053">
    <property type="reaction ID" value="UER00088"/>
</dbReference>
<dbReference type="Proteomes" id="UP000000663">
    <property type="component" value="Chromosome"/>
</dbReference>
<dbReference type="GO" id="GO:0005737">
    <property type="term" value="C:cytoplasm"/>
    <property type="evidence" value="ECO:0007669"/>
    <property type="project" value="UniProtKB-SubCell"/>
</dbReference>
<dbReference type="GO" id="GO:0005524">
    <property type="term" value="F:ATP binding"/>
    <property type="evidence" value="ECO:0007669"/>
    <property type="project" value="UniProtKB-UniRule"/>
</dbReference>
<dbReference type="GO" id="GO:0004765">
    <property type="term" value="F:shikimate kinase activity"/>
    <property type="evidence" value="ECO:0007669"/>
    <property type="project" value="UniProtKB-UniRule"/>
</dbReference>
<dbReference type="GO" id="GO:0008652">
    <property type="term" value="P:amino acid biosynthetic process"/>
    <property type="evidence" value="ECO:0007669"/>
    <property type="project" value="UniProtKB-KW"/>
</dbReference>
<dbReference type="GO" id="GO:0009073">
    <property type="term" value="P:aromatic amino acid family biosynthetic process"/>
    <property type="evidence" value="ECO:0007669"/>
    <property type="project" value="UniProtKB-KW"/>
</dbReference>
<dbReference type="GO" id="GO:0009423">
    <property type="term" value="P:chorismate biosynthetic process"/>
    <property type="evidence" value="ECO:0007669"/>
    <property type="project" value="UniProtKB-UniRule"/>
</dbReference>
<dbReference type="Gene3D" id="3.30.230.10">
    <property type="match status" value="1"/>
</dbReference>
<dbReference type="Gene3D" id="3.30.70.890">
    <property type="entry name" value="GHMP kinase, C-terminal domain"/>
    <property type="match status" value="1"/>
</dbReference>
<dbReference type="HAMAP" id="MF_00370">
    <property type="entry name" value="Shik_kinase_arch"/>
    <property type="match status" value="1"/>
</dbReference>
<dbReference type="InterPro" id="IPR013750">
    <property type="entry name" value="GHMP_kinase_C_dom"/>
</dbReference>
<dbReference type="InterPro" id="IPR036554">
    <property type="entry name" value="GHMP_kinase_C_sf"/>
</dbReference>
<dbReference type="InterPro" id="IPR006204">
    <property type="entry name" value="GHMP_kinase_N_dom"/>
</dbReference>
<dbReference type="InterPro" id="IPR020568">
    <property type="entry name" value="Ribosomal_Su5_D2-typ_SF"/>
</dbReference>
<dbReference type="InterPro" id="IPR014721">
    <property type="entry name" value="Ribsml_uS5_D2-typ_fold_subgr"/>
</dbReference>
<dbReference type="InterPro" id="IPR010189">
    <property type="entry name" value="SK_arc"/>
</dbReference>
<dbReference type="NCBIfam" id="TIGR01920">
    <property type="entry name" value="Shik_kin_archae"/>
    <property type="match status" value="1"/>
</dbReference>
<dbReference type="PANTHER" id="PTHR20861">
    <property type="entry name" value="HOMOSERINE/4-DIPHOSPHOCYTIDYL-2-C-METHYL-D-ERYTHRITOL KINASE"/>
    <property type="match status" value="1"/>
</dbReference>
<dbReference type="PANTHER" id="PTHR20861:SF3">
    <property type="entry name" value="SHIKIMATE KINASE"/>
    <property type="match status" value="1"/>
</dbReference>
<dbReference type="Pfam" id="PF08544">
    <property type="entry name" value="GHMP_kinases_C"/>
    <property type="match status" value="1"/>
</dbReference>
<dbReference type="Pfam" id="PF00288">
    <property type="entry name" value="GHMP_kinases_N"/>
    <property type="match status" value="1"/>
</dbReference>
<dbReference type="PIRSF" id="PIRSF005758">
    <property type="entry name" value="Shikimt_kin_arch"/>
    <property type="match status" value="1"/>
</dbReference>
<dbReference type="SUPFAM" id="SSF55060">
    <property type="entry name" value="GHMP Kinase, C-terminal domain"/>
    <property type="match status" value="1"/>
</dbReference>
<dbReference type="SUPFAM" id="SSF54211">
    <property type="entry name" value="Ribosomal protein S5 domain 2-like"/>
    <property type="match status" value="1"/>
</dbReference>